<organism>
    <name type="scientific">Salmonella enteritidis PT4 (strain P125109)</name>
    <dbReference type="NCBI Taxonomy" id="550537"/>
    <lineage>
        <taxon>Bacteria</taxon>
        <taxon>Pseudomonadati</taxon>
        <taxon>Pseudomonadota</taxon>
        <taxon>Gammaproteobacteria</taxon>
        <taxon>Enterobacterales</taxon>
        <taxon>Enterobacteriaceae</taxon>
        <taxon>Salmonella</taxon>
    </lineage>
</organism>
<protein>
    <recommendedName>
        <fullName evidence="1">Large ribosomal subunit protein uL4</fullName>
    </recommendedName>
    <alternativeName>
        <fullName evidence="3">50S ribosomal protein L4</fullName>
    </alternativeName>
</protein>
<accession>B5R290</accession>
<name>RL4_SALEP</name>
<keyword id="KW-0687">Ribonucleoprotein</keyword>
<keyword id="KW-0689">Ribosomal protein</keyword>
<keyword id="KW-0694">RNA-binding</keyword>
<keyword id="KW-0699">rRNA-binding</keyword>
<feature type="chain" id="PRO_1000142180" description="Large ribosomal subunit protein uL4">
    <location>
        <begin position="1"/>
        <end position="201"/>
    </location>
</feature>
<feature type="region of interest" description="Disordered" evidence="2">
    <location>
        <begin position="44"/>
        <end position="71"/>
    </location>
</feature>
<reference key="1">
    <citation type="journal article" date="2008" name="Genome Res.">
        <title>Comparative genome analysis of Salmonella enteritidis PT4 and Salmonella gallinarum 287/91 provides insights into evolutionary and host adaptation pathways.</title>
        <authorList>
            <person name="Thomson N.R."/>
            <person name="Clayton D.J."/>
            <person name="Windhorst D."/>
            <person name="Vernikos G."/>
            <person name="Davidson S."/>
            <person name="Churcher C."/>
            <person name="Quail M.A."/>
            <person name="Stevens M."/>
            <person name="Jones M.A."/>
            <person name="Watson M."/>
            <person name="Barron A."/>
            <person name="Layton A."/>
            <person name="Pickard D."/>
            <person name="Kingsley R.A."/>
            <person name="Bignell A."/>
            <person name="Clark L."/>
            <person name="Harris B."/>
            <person name="Ormond D."/>
            <person name="Abdellah Z."/>
            <person name="Brooks K."/>
            <person name="Cherevach I."/>
            <person name="Chillingworth T."/>
            <person name="Woodward J."/>
            <person name="Norberczak H."/>
            <person name="Lord A."/>
            <person name="Arrowsmith C."/>
            <person name="Jagels K."/>
            <person name="Moule S."/>
            <person name="Mungall K."/>
            <person name="Saunders M."/>
            <person name="Whitehead S."/>
            <person name="Chabalgoity J.A."/>
            <person name="Maskell D."/>
            <person name="Humphreys T."/>
            <person name="Roberts M."/>
            <person name="Barrow P.A."/>
            <person name="Dougan G."/>
            <person name="Parkhill J."/>
        </authorList>
    </citation>
    <scope>NUCLEOTIDE SEQUENCE [LARGE SCALE GENOMIC DNA]</scope>
    <source>
        <strain>P125109</strain>
    </source>
</reference>
<comment type="function">
    <text evidence="1">One of the primary rRNA binding proteins, this protein initially binds near the 5'-end of the 23S rRNA. It is important during the early stages of 50S assembly. It makes multiple contacts with different domains of the 23S rRNA in the assembled 50S subunit and ribosome.</text>
</comment>
<comment type="function">
    <text evidence="1">Forms part of the polypeptide exit tunnel.</text>
</comment>
<comment type="subunit">
    <text evidence="1">Part of the 50S ribosomal subunit.</text>
</comment>
<comment type="similarity">
    <text evidence="1">Belongs to the universal ribosomal protein uL4 family.</text>
</comment>
<sequence length="201" mass="22087">MELVLKDAQSALTVSETTFGRDFNEALVHQVVVAYAAGARQGTRAQKTRAEVTGSGKKPWRQKGTGRARSGSIKSPIWRSGGVTFAARPQDHSQKVNKKMYRGALKSILSELVRQDRLIVVEKFSVEAPKTKLLAQKLKDMALEDVLIITGELDENLFLAARNLHKVDVRDATGIDPVSLIAFDKVVMTADAVKQVEEMLA</sequence>
<dbReference type="EMBL" id="AM933172">
    <property type="protein sequence ID" value="CAR34842.1"/>
    <property type="molecule type" value="Genomic_DNA"/>
</dbReference>
<dbReference type="RefSeq" id="WP_000424395.1">
    <property type="nucleotide sequence ID" value="NC_011294.1"/>
</dbReference>
<dbReference type="SMR" id="B5R290"/>
<dbReference type="GeneID" id="97442859"/>
<dbReference type="KEGG" id="set:SEN3267"/>
<dbReference type="HOGENOM" id="CLU_041575_5_2_6"/>
<dbReference type="Proteomes" id="UP000000613">
    <property type="component" value="Chromosome"/>
</dbReference>
<dbReference type="GO" id="GO:1990904">
    <property type="term" value="C:ribonucleoprotein complex"/>
    <property type="evidence" value="ECO:0007669"/>
    <property type="project" value="UniProtKB-KW"/>
</dbReference>
<dbReference type="GO" id="GO:0005840">
    <property type="term" value="C:ribosome"/>
    <property type="evidence" value="ECO:0007669"/>
    <property type="project" value="UniProtKB-KW"/>
</dbReference>
<dbReference type="GO" id="GO:0019843">
    <property type="term" value="F:rRNA binding"/>
    <property type="evidence" value="ECO:0007669"/>
    <property type="project" value="UniProtKB-UniRule"/>
</dbReference>
<dbReference type="GO" id="GO:0003735">
    <property type="term" value="F:structural constituent of ribosome"/>
    <property type="evidence" value="ECO:0007669"/>
    <property type="project" value="InterPro"/>
</dbReference>
<dbReference type="GO" id="GO:0006412">
    <property type="term" value="P:translation"/>
    <property type="evidence" value="ECO:0007669"/>
    <property type="project" value="UniProtKB-UniRule"/>
</dbReference>
<dbReference type="FunFam" id="3.40.1370.10:FF:000001">
    <property type="entry name" value="50S ribosomal protein L4"/>
    <property type="match status" value="1"/>
</dbReference>
<dbReference type="Gene3D" id="3.40.1370.10">
    <property type="match status" value="1"/>
</dbReference>
<dbReference type="HAMAP" id="MF_01328_B">
    <property type="entry name" value="Ribosomal_uL4_B"/>
    <property type="match status" value="1"/>
</dbReference>
<dbReference type="InterPro" id="IPR002136">
    <property type="entry name" value="Ribosomal_uL4"/>
</dbReference>
<dbReference type="InterPro" id="IPR013005">
    <property type="entry name" value="Ribosomal_uL4-like"/>
</dbReference>
<dbReference type="InterPro" id="IPR023574">
    <property type="entry name" value="Ribosomal_uL4_dom_sf"/>
</dbReference>
<dbReference type="NCBIfam" id="TIGR03953">
    <property type="entry name" value="rplD_bact"/>
    <property type="match status" value="1"/>
</dbReference>
<dbReference type="PANTHER" id="PTHR10746">
    <property type="entry name" value="50S RIBOSOMAL PROTEIN L4"/>
    <property type="match status" value="1"/>
</dbReference>
<dbReference type="PANTHER" id="PTHR10746:SF6">
    <property type="entry name" value="LARGE RIBOSOMAL SUBUNIT PROTEIN UL4M"/>
    <property type="match status" value="1"/>
</dbReference>
<dbReference type="Pfam" id="PF00573">
    <property type="entry name" value="Ribosomal_L4"/>
    <property type="match status" value="1"/>
</dbReference>
<dbReference type="SUPFAM" id="SSF52166">
    <property type="entry name" value="Ribosomal protein L4"/>
    <property type="match status" value="1"/>
</dbReference>
<proteinExistence type="inferred from homology"/>
<gene>
    <name evidence="1" type="primary">rplD</name>
    <name type="ordered locus">SEN3267</name>
</gene>
<evidence type="ECO:0000255" key="1">
    <source>
        <dbReference type="HAMAP-Rule" id="MF_01328"/>
    </source>
</evidence>
<evidence type="ECO:0000256" key="2">
    <source>
        <dbReference type="SAM" id="MobiDB-lite"/>
    </source>
</evidence>
<evidence type="ECO:0000305" key="3"/>